<reference key="1">
    <citation type="submission" date="2007-02" db="EMBL/GenBank/DDBJ databases">
        <title>Complete sequence of Clostridium thermocellum ATCC 27405.</title>
        <authorList>
            <consortium name="US DOE Joint Genome Institute"/>
            <person name="Copeland A."/>
            <person name="Lucas S."/>
            <person name="Lapidus A."/>
            <person name="Barry K."/>
            <person name="Detter J.C."/>
            <person name="Glavina del Rio T."/>
            <person name="Hammon N."/>
            <person name="Israni S."/>
            <person name="Dalin E."/>
            <person name="Tice H."/>
            <person name="Pitluck S."/>
            <person name="Chertkov O."/>
            <person name="Brettin T."/>
            <person name="Bruce D."/>
            <person name="Han C."/>
            <person name="Tapia R."/>
            <person name="Gilna P."/>
            <person name="Schmutz J."/>
            <person name="Larimer F."/>
            <person name="Land M."/>
            <person name="Hauser L."/>
            <person name="Kyrpides N."/>
            <person name="Mikhailova N."/>
            <person name="Wu J.H.D."/>
            <person name="Newcomb M."/>
            <person name="Richardson P."/>
        </authorList>
    </citation>
    <scope>NUCLEOTIDE SEQUENCE [LARGE SCALE GENOMIC DNA]</scope>
    <source>
        <strain>ATCC 27405 / DSM 1237 / JCM 9322 / NBRC 103400 / NCIMB 10682 / NRRL B-4536 / VPI 7372</strain>
    </source>
</reference>
<sequence length="251" mass="28543">MNYLKTSGIVIKEVNTGEADRIITIFSKNKGKISALAKGARRPKSHLVAGTQLLCYSEFVLFKGKDMYTVNSCDVIESFYDIRNDLERLTYAAHMMDIVNDVILENQPASRLLQLFLNSLYMLSKTDRSPLQIVRVFEIRLLSTMGYAPWVSSCIKCGSTVFDSMYFSFLKCGFLCSKCLENDKGALKISEGAAKALNYIVHSKMSNLFSFEVSESVLDELGKVSQRYMKERLEKNYTKLDFIKTLDRIKC</sequence>
<accession>A3DEB9</accession>
<evidence type="ECO:0000255" key="1">
    <source>
        <dbReference type="HAMAP-Rule" id="MF_00201"/>
    </source>
</evidence>
<comment type="function">
    <text evidence="1">Involved in DNA repair and RecF pathway recombination.</text>
</comment>
<comment type="similarity">
    <text evidence="1">Belongs to the RecO family.</text>
</comment>
<keyword id="KW-0227">DNA damage</keyword>
<keyword id="KW-0233">DNA recombination</keyword>
<keyword id="KW-0234">DNA repair</keyword>
<keyword id="KW-1185">Reference proteome</keyword>
<proteinExistence type="inferred from homology"/>
<dbReference type="EMBL" id="CP000568">
    <property type="protein sequence ID" value="ABN52298.1"/>
    <property type="molecule type" value="Genomic_DNA"/>
</dbReference>
<dbReference type="RefSeq" id="WP_003515683.1">
    <property type="nucleotide sequence ID" value="NC_009012.1"/>
</dbReference>
<dbReference type="SMR" id="A3DEB9"/>
<dbReference type="STRING" id="203119.Cthe_1066"/>
<dbReference type="GeneID" id="35805347"/>
<dbReference type="KEGG" id="cth:Cthe_1066"/>
<dbReference type="eggNOG" id="COG1381">
    <property type="taxonomic scope" value="Bacteria"/>
</dbReference>
<dbReference type="HOGENOM" id="CLU_066632_3_0_9"/>
<dbReference type="OrthoDB" id="9797083at2"/>
<dbReference type="Proteomes" id="UP000002145">
    <property type="component" value="Chromosome"/>
</dbReference>
<dbReference type="GO" id="GO:0043590">
    <property type="term" value="C:bacterial nucleoid"/>
    <property type="evidence" value="ECO:0007669"/>
    <property type="project" value="TreeGrafter"/>
</dbReference>
<dbReference type="GO" id="GO:0006310">
    <property type="term" value="P:DNA recombination"/>
    <property type="evidence" value="ECO:0007669"/>
    <property type="project" value="UniProtKB-UniRule"/>
</dbReference>
<dbReference type="GO" id="GO:0006302">
    <property type="term" value="P:double-strand break repair"/>
    <property type="evidence" value="ECO:0007669"/>
    <property type="project" value="TreeGrafter"/>
</dbReference>
<dbReference type="Gene3D" id="2.40.50.140">
    <property type="entry name" value="Nucleic acid-binding proteins"/>
    <property type="match status" value="1"/>
</dbReference>
<dbReference type="Gene3D" id="1.20.1440.120">
    <property type="entry name" value="Recombination protein O, C-terminal domain"/>
    <property type="match status" value="1"/>
</dbReference>
<dbReference type="Gene3D" id="6.20.220.20">
    <property type="entry name" value="Recombination protein O, zinc-binding domain"/>
    <property type="match status" value="1"/>
</dbReference>
<dbReference type="HAMAP" id="MF_00201">
    <property type="entry name" value="RecO"/>
    <property type="match status" value="1"/>
</dbReference>
<dbReference type="InterPro" id="IPR037278">
    <property type="entry name" value="ARFGAP/RecO"/>
</dbReference>
<dbReference type="InterPro" id="IPR022572">
    <property type="entry name" value="DNA_rep/recomb_RecO_N"/>
</dbReference>
<dbReference type="InterPro" id="IPR012340">
    <property type="entry name" value="NA-bd_OB-fold"/>
</dbReference>
<dbReference type="InterPro" id="IPR003717">
    <property type="entry name" value="RecO"/>
</dbReference>
<dbReference type="InterPro" id="IPR042242">
    <property type="entry name" value="RecO_C"/>
</dbReference>
<dbReference type="NCBIfam" id="TIGR00613">
    <property type="entry name" value="reco"/>
    <property type="match status" value="1"/>
</dbReference>
<dbReference type="PANTHER" id="PTHR33991">
    <property type="entry name" value="DNA REPAIR PROTEIN RECO"/>
    <property type="match status" value="1"/>
</dbReference>
<dbReference type="PANTHER" id="PTHR33991:SF1">
    <property type="entry name" value="DNA REPAIR PROTEIN RECO"/>
    <property type="match status" value="1"/>
</dbReference>
<dbReference type="Pfam" id="PF02565">
    <property type="entry name" value="RecO_C"/>
    <property type="match status" value="1"/>
</dbReference>
<dbReference type="Pfam" id="PF11967">
    <property type="entry name" value="RecO_N"/>
    <property type="match status" value="1"/>
</dbReference>
<dbReference type="SUPFAM" id="SSF57863">
    <property type="entry name" value="ArfGap/RecO-like zinc finger"/>
    <property type="match status" value="1"/>
</dbReference>
<dbReference type="SUPFAM" id="SSF50249">
    <property type="entry name" value="Nucleic acid-binding proteins"/>
    <property type="match status" value="1"/>
</dbReference>
<gene>
    <name evidence="1" type="primary">recO</name>
    <name type="ordered locus">Cthe_1066</name>
</gene>
<feature type="chain" id="PRO_1000012126" description="DNA repair protein RecO">
    <location>
        <begin position="1"/>
        <end position="251"/>
    </location>
</feature>
<protein>
    <recommendedName>
        <fullName evidence="1">DNA repair protein RecO</fullName>
    </recommendedName>
    <alternativeName>
        <fullName evidence="1">Recombination protein O</fullName>
    </alternativeName>
</protein>
<name>RECO_ACET2</name>
<organism>
    <name type="scientific">Acetivibrio thermocellus (strain ATCC 27405 / DSM 1237 / JCM 9322 / NBRC 103400 / NCIMB 10682 / NRRL B-4536 / VPI 7372)</name>
    <name type="common">Clostridium thermocellum</name>
    <dbReference type="NCBI Taxonomy" id="203119"/>
    <lineage>
        <taxon>Bacteria</taxon>
        <taxon>Bacillati</taxon>
        <taxon>Bacillota</taxon>
        <taxon>Clostridia</taxon>
        <taxon>Eubacteriales</taxon>
        <taxon>Oscillospiraceae</taxon>
        <taxon>Acetivibrio</taxon>
    </lineage>
</organism>